<reference key="1">
    <citation type="journal article" date="1993" name="Mol. Gen. Genet.">
        <title>Partial characterization of the Nicotiana tabacum actin gene family: evidence for pollen-specific expression of one of the gene family members.</title>
        <authorList>
            <person name="Thangavelu M."/>
            <person name="Belostotsky D."/>
            <person name="Bevan M.W."/>
            <person name="Flavell R.B."/>
            <person name="Rogers H.J."/>
            <person name="Lonsdale D.M."/>
        </authorList>
    </citation>
    <scope>NUCLEOTIDE SEQUENCE [GENOMIC DNA]</scope>
</reference>
<dbReference type="EC" id="3.6.4.-" evidence="1"/>
<dbReference type="EMBL" id="X63603">
    <property type="protein sequence ID" value="CAA45149.1"/>
    <property type="molecule type" value="Genomic_DNA"/>
</dbReference>
<dbReference type="PIR" id="S35257">
    <property type="entry name" value="S31933"/>
</dbReference>
<dbReference type="SMR" id="Q05214"/>
<dbReference type="STRING" id="4097.Q05214"/>
<dbReference type="PaxDb" id="4097-Q05214"/>
<dbReference type="Proteomes" id="UP000084051">
    <property type="component" value="Unplaced"/>
</dbReference>
<dbReference type="GO" id="GO:0015629">
    <property type="term" value="C:actin cytoskeleton"/>
    <property type="evidence" value="ECO:0000318"/>
    <property type="project" value="GO_Central"/>
</dbReference>
<dbReference type="GO" id="GO:0005737">
    <property type="term" value="C:cytoplasm"/>
    <property type="evidence" value="ECO:0007669"/>
    <property type="project" value="UniProtKB-KW"/>
</dbReference>
<dbReference type="GO" id="GO:0005524">
    <property type="term" value="F:ATP binding"/>
    <property type="evidence" value="ECO:0007669"/>
    <property type="project" value="UniProtKB-KW"/>
</dbReference>
<dbReference type="GO" id="GO:0016787">
    <property type="term" value="F:hydrolase activity"/>
    <property type="evidence" value="ECO:0007669"/>
    <property type="project" value="UniProtKB-KW"/>
</dbReference>
<dbReference type="CDD" id="cd10224">
    <property type="entry name" value="ASKHA_NBD_actin"/>
    <property type="match status" value="1"/>
</dbReference>
<dbReference type="FunFam" id="2.30.36.70:FF:000001">
    <property type="entry name" value="Actin, alpha skeletal muscle"/>
    <property type="match status" value="1"/>
</dbReference>
<dbReference type="FunFam" id="3.30.420.40:FF:000291">
    <property type="entry name" value="Actin, alpha skeletal muscle"/>
    <property type="match status" value="1"/>
</dbReference>
<dbReference type="FunFam" id="3.90.640.10:FF:000001">
    <property type="entry name" value="Actin, muscle"/>
    <property type="match status" value="1"/>
</dbReference>
<dbReference type="FunFam" id="3.30.420.40:FF:000404">
    <property type="entry name" value="Major actin"/>
    <property type="match status" value="1"/>
</dbReference>
<dbReference type="FunFam" id="3.30.420.40:FF:000058">
    <property type="entry name" value="Putative actin-related protein 5"/>
    <property type="match status" value="1"/>
</dbReference>
<dbReference type="Gene3D" id="3.30.420.40">
    <property type="match status" value="2"/>
</dbReference>
<dbReference type="Gene3D" id="3.90.640.10">
    <property type="entry name" value="Actin, Chain A, domain 4"/>
    <property type="match status" value="1"/>
</dbReference>
<dbReference type="InterPro" id="IPR004000">
    <property type="entry name" value="Actin"/>
</dbReference>
<dbReference type="InterPro" id="IPR020902">
    <property type="entry name" value="Actin/actin-like_CS"/>
</dbReference>
<dbReference type="InterPro" id="IPR004001">
    <property type="entry name" value="Actin_CS"/>
</dbReference>
<dbReference type="InterPro" id="IPR043129">
    <property type="entry name" value="ATPase_NBD"/>
</dbReference>
<dbReference type="PANTHER" id="PTHR11937">
    <property type="entry name" value="ACTIN"/>
    <property type="match status" value="1"/>
</dbReference>
<dbReference type="Pfam" id="PF00022">
    <property type="entry name" value="Actin"/>
    <property type="match status" value="1"/>
</dbReference>
<dbReference type="PRINTS" id="PR00190">
    <property type="entry name" value="ACTIN"/>
</dbReference>
<dbReference type="SMART" id="SM00268">
    <property type="entry name" value="ACTIN"/>
    <property type="match status" value="1"/>
</dbReference>
<dbReference type="SUPFAM" id="SSF53067">
    <property type="entry name" value="Actin-like ATPase domain"/>
    <property type="match status" value="2"/>
</dbReference>
<dbReference type="PROSITE" id="PS00406">
    <property type="entry name" value="ACTINS_1"/>
    <property type="match status" value="1"/>
</dbReference>
<dbReference type="PROSITE" id="PS00432">
    <property type="entry name" value="ACTINS_2"/>
    <property type="match status" value="1"/>
</dbReference>
<dbReference type="PROSITE" id="PS01132">
    <property type="entry name" value="ACTINS_ACT_LIKE"/>
    <property type="match status" value="1"/>
</dbReference>
<feature type="chain" id="PRO_0000089037" description="Actin">
    <location>
        <begin position="1"/>
        <end position="377"/>
    </location>
</feature>
<organism>
    <name type="scientific">Nicotiana tabacum</name>
    <name type="common">Common tobacco</name>
    <dbReference type="NCBI Taxonomy" id="4097"/>
    <lineage>
        <taxon>Eukaryota</taxon>
        <taxon>Viridiplantae</taxon>
        <taxon>Streptophyta</taxon>
        <taxon>Embryophyta</taxon>
        <taxon>Tracheophyta</taxon>
        <taxon>Spermatophyta</taxon>
        <taxon>Magnoliopsida</taxon>
        <taxon>eudicotyledons</taxon>
        <taxon>Gunneridae</taxon>
        <taxon>Pentapetalae</taxon>
        <taxon>asterids</taxon>
        <taxon>lamiids</taxon>
        <taxon>Solanales</taxon>
        <taxon>Solanaceae</taxon>
        <taxon>Nicotianoideae</taxon>
        <taxon>Nicotianeae</taxon>
        <taxon>Nicotiana</taxon>
    </lineage>
</organism>
<keyword id="KW-0067">ATP-binding</keyword>
<keyword id="KW-0963">Cytoplasm</keyword>
<keyword id="KW-0206">Cytoskeleton</keyword>
<keyword id="KW-0378">Hydrolase</keyword>
<keyword id="KW-0547">Nucleotide-binding</keyword>
<keyword id="KW-1185">Reference proteome</keyword>
<evidence type="ECO:0000250" key="1">
    <source>
        <dbReference type="UniProtKB" id="P68137"/>
    </source>
</evidence>
<evidence type="ECO:0000305" key="2"/>
<proteinExistence type="inferred from homology"/>
<name>ACT1_TOBAC</name>
<accession>Q05214</accession>
<comment type="function">
    <text>Actins are highly conserved proteins that are involved in various types of cell motility and are ubiquitously expressed in all eukaryotic cells. Essential component of cell cytoskeleton; plays an important role in cytoplasmic streaming, cell shape determination, cell division, organelle movement and extension growth.</text>
</comment>
<comment type="catalytic activity">
    <reaction evidence="1">
        <text>ATP + H2O = ADP + phosphate + H(+)</text>
        <dbReference type="Rhea" id="RHEA:13065"/>
        <dbReference type="ChEBI" id="CHEBI:15377"/>
        <dbReference type="ChEBI" id="CHEBI:15378"/>
        <dbReference type="ChEBI" id="CHEBI:30616"/>
        <dbReference type="ChEBI" id="CHEBI:43474"/>
        <dbReference type="ChEBI" id="CHEBI:456216"/>
    </reaction>
</comment>
<comment type="subcellular location">
    <subcellularLocation>
        <location>Cytoplasm</location>
        <location>Cytoskeleton</location>
    </subcellularLocation>
</comment>
<comment type="miscellaneous">
    <text>There are at least 7 different actin genes in tobacco.</text>
</comment>
<comment type="similarity">
    <text evidence="2">Belongs to the actin family.</text>
</comment>
<sequence length="377" mass="41739">MADGEDIQPLVCDNGTGMVKAGFAGDDAPRAVFPSIVGRPRHTGVMVGMGQKDAYVGDEAQSKRGILTLKYPIEHGIVSNWDDMEKIWHHTFYNELRVAPEEHPVLLTEAPLNPKANREKMTQIMFETFNTPAMYVAIQAVLSLYASGRTTGIVLDSGDGVSHTVPIYEGYALPHAILRLDLAGRDLTDHLMKILTERGYSFTTTAEREIVRDVKEKLSYIALDFEQEMETSKTSSSVEKSYELPDGQVITIGAERFRCPEVLFQPSMIGMEAAGIHETTYNSIMKCDVDIRKDLYGKIVLSGGSTMFPGIADRMSKEITALAPSSMKIKVVAPPERKYSVWIGGSILASLSTFQQMWIAKAEYDESGPSIVHRKCF</sequence>
<protein>
    <recommendedName>
        <fullName>Actin</fullName>
        <ecNumber evidence="1">3.6.4.-</ecNumber>
    </recommendedName>
</protein>